<comment type="function">
    <text evidence="1">Plays a role in the flagellum-specific transport system.</text>
</comment>
<comment type="subcellular location">
    <subcellularLocation>
        <location evidence="3">Cell membrane</location>
        <topology evidence="3">Multi-pass membrane protein</topology>
    </subcellularLocation>
    <subcellularLocation>
        <location evidence="1">Bacterial flagellum basal body</location>
    </subcellularLocation>
</comment>
<comment type="similarity">
    <text evidence="3">Belongs to the FliP/MopC/SpaP family.</text>
</comment>
<sequence length="254" mass="29038">MRKCFNFFLFFSVTSLSFAQTKSLQTTNGLNFPFLNFDSIGGSEIAFSLQLLILLTIITLSPAFLVLMTSFLRISIVLDFIRRALSLQQSPPTQIVMGLALFLTIFTMWPTFNSIYEQAYLPLKESKINFNEFYNKGIAPLRIFMYKQMSDGRHEEIRLFMSMSNYDRPKNFSEVPTHVLIAAFILHELKVAFKMGILIFLPFIVLDIIVASVLMAMGMIMLPPVMISLPFKLILFVMVDGWTLITSGLIKSFM</sequence>
<organism>
    <name type="scientific">Borreliella burgdorferi (strain ATCC 35210 / DSM 4680 / CIP 102532 / B31)</name>
    <name type="common">Borrelia burgdorferi</name>
    <dbReference type="NCBI Taxonomy" id="224326"/>
    <lineage>
        <taxon>Bacteria</taxon>
        <taxon>Pseudomonadati</taxon>
        <taxon>Spirochaetota</taxon>
        <taxon>Spirochaetia</taxon>
        <taxon>Spirochaetales</taxon>
        <taxon>Borreliaceae</taxon>
        <taxon>Borreliella</taxon>
    </lineage>
</organism>
<protein>
    <recommendedName>
        <fullName>Flagellar biosynthetic protein FliP</fullName>
    </recommendedName>
</protein>
<proteinExistence type="inferred from homology"/>
<gene>
    <name type="primary">fliP</name>
    <name type="ordered locus">BB_0275</name>
</gene>
<keyword id="KW-0975">Bacterial flagellum</keyword>
<keyword id="KW-1005">Bacterial flagellum biogenesis</keyword>
<keyword id="KW-1006">Bacterial flagellum protein export</keyword>
<keyword id="KW-1003">Cell membrane</keyword>
<keyword id="KW-0472">Membrane</keyword>
<keyword id="KW-0653">Protein transport</keyword>
<keyword id="KW-1185">Reference proteome</keyword>
<keyword id="KW-0812">Transmembrane</keyword>
<keyword id="KW-1133">Transmembrane helix</keyword>
<keyword id="KW-0813">Transport</keyword>
<reference key="1">
    <citation type="submission" date="1995-12" db="EMBL/GenBank/DDBJ databases">
        <authorList>
            <person name="Dunn J.J."/>
            <person name="Butler-Loffredo L."/>
            <person name="Kieleczawa J."/>
            <person name="Medalle J."/>
            <person name="Luft B.J."/>
        </authorList>
    </citation>
    <scope>NUCLEOTIDE SEQUENCE [GENOMIC DNA]</scope>
    <source>
        <strain>ATCC 35210 / DSM 4680 / CIP 102532 / B31</strain>
    </source>
</reference>
<reference key="2">
    <citation type="submission" date="1996-02" db="EMBL/GenBank/DDBJ databases">
        <authorList>
            <person name="Ge Y."/>
            <person name="Charon N.W."/>
        </authorList>
    </citation>
    <scope>NUCLEOTIDE SEQUENCE [GENOMIC DNA]</scope>
    <source>
        <strain>212</strain>
    </source>
</reference>
<reference key="3">
    <citation type="journal article" date="1997" name="Nature">
        <title>Genomic sequence of a Lyme disease spirochaete, Borrelia burgdorferi.</title>
        <authorList>
            <person name="Fraser C.M."/>
            <person name="Casjens S."/>
            <person name="Huang W.M."/>
            <person name="Sutton G.G."/>
            <person name="Clayton R.A."/>
            <person name="Lathigra R."/>
            <person name="White O."/>
            <person name="Ketchum K.A."/>
            <person name="Dodson R.J."/>
            <person name="Hickey E.K."/>
            <person name="Gwinn M.L."/>
            <person name="Dougherty B.A."/>
            <person name="Tomb J.-F."/>
            <person name="Fleischmann R.D."/>
            <person name="Richardson D.L."/>
            <person name="Peterson J.D."/>
            <person name="Kerlavage A.R."/>
            <person name="Quackenbush J."/>
            <person name="Salzberg S.L."/>
            <person name="Hanson M."/>
            <person name="van Vugt R."/>
            <person name="Palmer N."/>
            <person name="Adams M.D."/>
            <person name="Gocayne J.D."/>
            <person name="Weidman J.F."/>
            <person name="Utterback T.R."/>
            <person name="Watthey L."/>
            <person name="McDonald L.A."/>
            <person name="Artiach P."/>
            <person name="Bowman C."/>
            <person name="Garland S.A."/>
            <person name="Fujii C."/>
            <person name="Cotton M.D."/>
            <person name="Horst K."/>
            <person name="Roberts K.M."/>
            <person name="Hatch B."/>
            <person name="Smith H.O."/>
            <person name="Venter J.C."/>
        </authorList>
    </citation>
    <scope>NUCLEOTIDE SEQUENCE [LARGE SCALE GENOMIC DNA]</scope>
    <source>
        <strain>ATCC 35210 / DSM 4680 / CIP 102532 / B31</strain>
    </source>
</reference>
<evidence type="ECO:0000250" key="1"/>
<evidence type="ECO:0000255" key="2"/>
<evidence type="ECO:0000305" key="3"/>
<name>FLIP_BORBU</name>
<dbReference type="EMBL" id="U43739">
    <property type="protein sequence ID" value="AAA85599.1"/>
    <property type="molecule type" value="Genomic_DNA"/>
</dbReference>
<dbReference type="EMBL" id="L75945">
    <property type="protein sequence ID" value="AAB58968.1"/>
    <property type="molecule type" value="Genomic_DNA"/>
</dbReference>
<dbReference type="EMBL" id="AE000783">
    <property type="protein sequence ID" value="AAC66673.1"/>
    <property type="molecule type" value="Genomic_DNA"/>
</dbReference>
<dbReference type="PIR" id="C70134">
    <property type="entry name" value="C70134"/>
</dbReference>
<dbReference type="RefSeq" id="NP_212409.1">
    <property type="nucleotide sequence ID" value="NC_001318.1"/>
</dbReference>
<dbReference type="RefSeq" id="WP_002556874.1">
    <property type="nucleotide sequence ID" value="NC_001318.1"/>
</dbReference>
<dbReference type="SMR" id="Q44763"/>
<dbReference type="STRING" id="224326.BB_0275"/>
<dbReference type="PaxDb" id="224326-BB_0275"/>
<dbReference type="EnsemblBacteria" id="AAC66673">
    <property type="protein sequence ID" value="AAC66673"/>
    <property type="gene ID" value="BB_0275"/>
</dbReference>
<dbReference type="GeneID" id="56567706"/>
<dbReference type="KEGG" id="bbu:BB_0275"/>
<dbReference type="PATRIC" id="fig|224326.49.peg.674"/>
<dbReference type="HOGENOM" id="CLU_042028_0_1_12"/>
<dbReference type="OrthoDB" id="9805111at2"/>
<dbReference type="Proteomes" id="UP000001807">
    <property type="component" value="Chromosome"/>
</dbReference>
<dbReference type="GO" id="GO:0009425">
    <property type="term" value="C:bacterial-type flagellum basal body"/>
    <property type="evidence" value="ECO:0007669"/>
    <property type="project" value="UniProtKB-SubCell"/>
</dbReference>
<dbReference type="GO" id="GO:0005886">
    <property type="term" value="C:plasma membrane"/>
    <property type="evidence" value="ECO:0007669"/>
    <property type="project" value="UniProtKB-SubCell"/>
</dbReference>
<dbReference type="GO" id="GO:0044781">
    <property type="term" value="P:bacterial-type flagellum organization"/>
    <property type="evidence" value="ECO:0007669"/>
    <property type="project" value="UniProtKB-KW"/>
</dbReference>
<dbReference type="GO" id="GO:0009306">
    <property type="term" value="P:protein secretion"/>
    <property type="evidence" value="ECO:0007669"/>
    <property type="project" value="InterPro"/>
</dbReference>
<dbReference type="InterPro" id="IPR005837">
    <property type="entry name" value="FliP"/>
</dbReference>
<dbReference type="InterPro" id="IPR005838">
    <property type="entry name" value="T3SS_IM_P"/>
</dbReference>
<dbReference type="NCBIfam" id="TIGR01103">
    <property type="entry name" value="fliP"/>
    <property type="match status" value="1"/>
</dbReference>
<dbReference type="NCBIfam" id="NF009438">
    <property type="entry name" value="PRK12797.1"/>
    <property type="match status" value="1"/>
</dbReference>
<dbReference type="PANTHER" id="PTHR30587">
    <property type="entry name" value="FLAGELLAR BIOSYNTHETIC PROTEIN FLIP"/>
    <property type="match status" value="1"/>
</dbReference>
<dbReference type="PANTHER" id="PTHR30587:SF0">
    <property type="entry name" value="FLAGELLAR BIOSYNTHETIC PROTEIN FLIP"/>
    <property type="match status" value="1"/>
</dbReference>
<dbReference type="Pfam" id="PF00813">
    <property type="entry name" value="FliP"/>
    <property type="match status" value="1"/>
</dbReference>
<dbReference type="PRINTS" id="PR00951">
    <property type="entry name" value="FLGBIOSNFLIP"/>
</dbReference>
<dbReference type="PRINTS" id="PR01302">
    <property type="entry name" value="TYPE3IMPPROT"/>
</dbReference>
<dbReference type="PROSITE" id="PS01060">
    <property type="entry name" value="FLIP_1"/>
    <property type="match status" value="1"/>
</dbReference>
<dbReference type="PROSITE" id="PS01061">
    <property type="entry name" value="FLIP_2"/>
    <property type="match status" value="1"/>
</dbReference>
<feature type="chain" id="PRO_0000191980" description="Flagellar biosynthetic protein FliP">
    <location>
        <begin position="1"/>
        <end position="254"/>
    </location>
</feature>
<feature type="transmembrane region" description="Helical" evidence="2">
    <location>
        <begin position="29"/>
        <end position="49"/>
    </location>
</feature>
<feature type="transmembrane region" description="Helical" evidence="2">
    <location>
        <begin position="51"/>
        <end position="71"/>
    </location>
</feature>
<feature type="transmembrane region" description="Helical" evidence="2">
    <location>
        <begin position="95"/>
        <end position="115"/>
    </location>
</feature>
<feature type="transmembrane region" description="Helical" evidence="2">
    <location>
        <begin position="175"/>
        <end position="195"/>
    </location>
</feature>
<feature type="transmembrane region" description="Helical" evidence="2">
    <location>
        <begin position="197"/>
        <end position="217"/>
    </location>
</feature>
<feature type="transmembrane region" description="Helical" evidence="2">
    <location>
        <begin position="219"/>
        <end position="239"/>
    </location>
</feature>
<feature type="sequence conflict" description="In Ref. 2; AAB58968." evidence="3" ref="2">
    <original>F</original>
    <variation>L</variation>
    <location>
        <position position="160"/>
    </location>
</feature>
<feature type="sequence conflict" description="In Ref. 2; AAB58968." evidence="3" ref="2">
    <original>T</original>
    <variation>S</variation>
    <location>
        <position position="177"/>
    </location>
</feature>
<feature type="sequence conflict" description="In Ref. 2; AAB58968." evidence="3" ref="2">
    <original>P</original>
    <variation>H</variation>
    <location>
        <position position="230"/>
    </location>
</feature>
<accession>Q44763</accession>
<accession>Q44905</accession>